<accession>Q72IU3</accession>
<reference key="1">
    <citation type="journal article" date="2004" name="Nat. Biotechnol.">
        <title>The genome sequence of the extreme thermophile Thermus thermophilus.</title>
        <authorList>
            <person name="Henne A."/>
            <person name="Brueggemann H."/>
            <person name="Raasch C."/>
            <person name="Wiezer A."/>
            <person name="Hartsch T."/>
            <person name="Liesegang H."/>
            <person name="Johann A."/>
            <person name="Lienard T."/>
            <person name="Gohl O."/>
            <person name="Martinez-Arias R."/>
            <person name="Jacobi C."/>
            <person name="Starkuviene V."/>
            <person name="Schlenczeck S."/>
            <person name="Dencker S."/>
            <person name="Huber R."/>
            <person name="Klenk H.-P."/>
            <person name="Kramer W."/>
            <person name="Merkl R."/>
            <person name="Gottschalk G."/>
            <person name="Fritz H.-J."/>
        </authorList>
    </citation>
    <scope>NUCLEOTIDE SEQUENCE [LARGE SCALE GENOMIC DNA]</scope>
    <source>
        <strain>ATCC BAA-163 / DSM 7039 / HB27</strain>
    </source>
</reference>
<comment type="function">
    <text evidence="1">Heme chaperone required for the biogenesis of c-type cytochromes. Transiently binds heme delivered by CcmC and transfers the heme to apo-cytochromes in a process facilitated by CcmF and CcmH.</text>
</comment>
<comment type="subcellular location">
    <subcellularLocation>
        <location evidence="1">Cell inner membrane</location>
        <topology evidence="1">Single-pass type II membrane protein</topology>
        <orientation evidence="1">Periplasmic side</orientation>
    </subcellularLocation>
</comment>
<comment type="similarity">
    <text evidence="1">Belongs to the CcmE/CycJ family.</text>
</comment>
<organism>
    <name type="scientific">Thermus thermophilus (strain ATCC BAA-163 / DSM 7039 / HB27)</name>
    <dbReference type="NCBI Taxonomy" id="262724"/>
    <lineage>
        <taxon>Bacteria</taxon>
        <taxon>Thermotogati</taxon>
        <taxon>Deinococcota</taxon>
        <taxon>Deinococci</taxon>
        <taxon>Thermales</taxon>
        <taxon>Thermaceae</taxon>
        <taxon>Thermus</taxon>
    </lineage>
</organism>
<dbReference type="EMBL" id="AE017221">
    <property type="protein sequence ID" value="AAS81381.1"/>
    <property type="molecule type" value="Genomic_DNA"/>
</dbReference>
<dbReference type="RefSeq" id="WP_011173456.1">
    <property type="nucleotide sequence ID" value="NC_005835.1"/>
</dbReference>
<dbReference type="SMR" id="Q72IU3"/>
<dbReference type="KEGG" id="tth:TT_C1039"/>
<dbReference type="eggNOG" id="COG2332">
    <property type="taxonomic scope" value="Bacteria"/>
</dbReference>
<dbReference type="HOGENOM" id="CLU_079503_2_0_0"/>
<dbReference type="OrthoDB" id="9793584at2"/>
<dbReference type="Proteomes" id="UP000000592">
    <property type="component" value="Chromosome"/>
</dbReference>
<dbReference type="GO" id="GO:0005886">
    <property type="term" value="C:plasma membrane"/>
    <property type="evidence" value="ECO:0007669"/>
    <property type="project" value="UniProtKB-SubCell"/>
</dbReference>
<dbReference type="GO" id="GO:0020037">
    <property type="term" value="F:heme binding"/>
    <property type="evidence" value="ECO:0007669"/>
    <property type="project" value="InterPro"/>
</dbReference>
<dbReference type="GO" id="GO:0046872">
    <property type="term" value="F:metal ion binding"/>
    <property type="evidence" value="ECO:0007669"/>
    <property type="project" value="UniProtKB-KW"/>
</dbReference>
<dbReference type="GO" id="GO:0017004">
    <property type="term" value="P:cytochrome complex assembly"/>
    <property type="evidence" value="ECO:0007669"/>
    <property type="project" value="UniProtKB-KW"/>
</dbReference>
<dbReference type="Gene3D" id="2.40.50.140">
    <property type="entry name" value="Nucleic acid-binding proteins"/>
    <property type="match status" value="1"/>
</dbReference>
<dbReference type="HAMAP" id="MF_01959">
    <property type="entry name" value="CcmE"/>
    <property type="match status" value="1"/>
</dbReference>
<dbReference type="InterPro" id="IPR004329">
    <property type="entry name" value="CcmE"/>
</dbReference>
<dbReference type="InterPro" id="IPR036127">
    <property type="entry name" value="CcmE-like_sf"/>
</dbReference>
<dbReference type="InterPro" id="IPR012340">
    <property type="entry name" value="NA-bd_OB-fold"/>
</dbReference>
<dbReference type="NCBIfam" id="NF009727">
    <property type="entry name" value="PRK13254.1-1"/>
    <property type="match status" value="1"/>
</dbReference>
<dbReference type="PANTHER" id="PTHR34128">
    <property type="entry name" value="CYTOCHROME C-TYPE BIOGENESIS PROTEIN CCME HOMOLOG, MITOCHONDRIAL"/>
    <property type="match status" value="1"/>
</dbReference>
<dbReference type="PANTHER" id="PTHR34128:SF2">
    <property type="entry name" value="CYTOCHROME C-TYPE BIOGENESIS PROTEIN CCME HOMOLOG, MITOCHONDRIAL"/>
    <property type="match status" value="1"/>
</dbReference>
<dbReference type="Pfam" id="PF03100">
    <property type="entry name" value="CcmE"/>
    <property type="match status" value="1"/>
</dbReference>
<dbReference type="SUPFAM" id="SSF82093">
    <property type="entry name" value="Heme chaperone CcmE"/>
    <property type="match status" value="1"/>
</dbReference>
<evidence type="ECO:0000255" key="1">
    <source>
        <dbReference type="HAMAP-Rule" id="MF_01959"/>
    </source>
</evidence>
<name>CCME_THET2</name>
<proteinExistence type="inferred from homology"/>
<keyword id="KW-0997">Cell inner membrane</keyword>
<keyword id="KW-1003">Cell membrane</keyword>
<keyword id="KW-0201">Cytochrome c-type biogenesis</keyword>
<keyword id="KW-0349">Heme</keyword>
<keyword id="KW-0408">Iron</keyword>
<keyword id="KW-0472">Membrane</keyword>
<keyword id="KW-0479">Metal-binding</keyword>
<keyword id="KW-0735">Signal-anchor</keyword>
<keyword id="KW-0812">Transmembrane</keyword>
<keyword id="KW-1133">Transmembrane helix</keyword>
<protein>
    <recommendedName>
        <fullName evidence="1">Cytochrome c-type biogenesis protein CcmE</fullName>
    </recommendedName>
    <alternativeName>
        <fullName evidence="1">Cytochrome c maturation protein E</fullName>
    </alternativeName>
    <alternativeName>
        <fullName evidence="1">Heme chaperone CcmE</fullName>
    </alternativeName>
</protein>
<gene>
    <name evidence="1" type="primary">ccmE</name>
    <name evidence="1" type="synonym">cycJ</name>
    <name type="ordered locus">TT_C1039</name>
</gene>
<sequence>MKGKYLLGILVILGALGYMVFGGLGRNLVYFLTPSEYLQDQARYQNRPVRLGGLVKPGTVQYDKDRLELRFVLTDGVAEVPVLHKGTPPGMFKEGQGVVVEGRFQEGVFQGTNLLVKHSETYQPPKEGWTPEEVRKLIEEAQ</sequence>
<feature type="chain" id="PRO_0000238870" description="Cytochrome c-type biogenesis protein CcmE">
    <location>
        <begin position="1"/>
        <end position="142"/>
    </location>
</feature>
<feature type="topological domain" description="Cytoplasmic" evidence="1">
    <location>
        <begin position="1"/>
        <end position="2"/>
    </location>
</feature>
<feature type="transmembrane region" description="Helical; Signal-anchor for type II membrane protein" evidence="1">
    <location>
        <begin position="3"/>
        <end position="23"/>
    </location>
</feature>
<feature type="topological domain" description="Periplasmic" evidence="1">
    <location>
        <begin position="24"/>
        <end position="142"/>
    </location>
</feature>
<feature type="binding site" description="covalent" evidence="1">
    <location>
        <position position="118"/>
    </location>
    <ligand>
        <name>heme</name>
        <dbReference type="ChEBI" id="CHEBI:30413"/>
    </ligand>
</feature>
<feature type="binding site" description="axial binding residue" evidence="1">
    <location>
        <position position="122"/>
    </location>
    <ligand>
        <name>heme</name>
        <dbReference type="ChEBI" id="CHEBI:30413"/>
    </ligand>
    <ligandPart>
        <name>Fe</name>
        <dbReference type="ChEBI" id="CHEBI:18248"/>
    </ligandPart>
</feature>